<evidence type="ECO:0000250" key="1"/>
<evidence type="ECO:0000250" key="2">
    <source>
        <dbReference type="UniProtKB" id="O60496"/>
    </source>
</evidence>
<evidence type="ECO:0000250" key="3">
    <source>
        <dbReference type="UniProtKB" id="O70469"/>
    </source>
</evidence>
<evidence type="ECO:0000255" key="4">
    <source>
        <dbReference type="PROSITE-ProRule" id="PRU00145"/>
    </source>
</evidence>
<evidence type="ECO:0000255" key="5">
    <source>
        <dbReference type="PROSITE-ProRule" id="PRU00389"/>
    </source>
</evidence>
<evidence type="ECO:0000256" key="6">
    <source>
        <dbReference type="SAM" id="MobiDB-lite"/>
    </source>
</evidence>
<evidence type="ECO:0000305" key="7"/>
<proteinExistence type="evidence at transcript level"/>
<feature type="chain" id="PRO_0000356280" description="Docking protein 2">
    <location>
        <begin position="1"/>
        <end position="413"/>
    </location>
</feature>
<feature type="domain" description="PH" evidence="4">
    <location>
        <begin position="4"/>
        <end position="114"/>
    </location>
</feature>
<feature type="domain" description="IRS-type PTB" evidence="5">
    <location>
        <begin position="147"/>
        <end position="252"/>
    </location>
</feature>
<feature type="region of interest" description="Disordered" evidence="6">
    <location>
        <begin position="247"/>
        <end position="292"/>
    </location>
</feature>
<feature type="region of interest" description="Disordered" evidence="6">
    <location>
        <begin position="362"/>
        <end position="383"/>
    </location>
</feature>
<feature type="compositionally biased region" description="Pro residues" evidence="6">
    <location>
        <begin position="250"/>
        <end position="268"/>
    </location>
</feature>
<feature type="compositionally biased region" description="Pro residues" evidence="6">
    <location>
        <begin position="277"/>
        <end position="289"/>
    </location>
</feature>
<feature type="compositionally biased region" description="Basic and acidic residues" evidence="6">
    <location>
        <begin position="362"/>
        <end position="381"/>
    </location>
</feature>
<feature type="modified residue" description="Phosphotyrosine" evidence="3">
    <location>
        <position position="271"/>
    </location>
</feature>
<feature type="modified residue" description="Phosphotyrosine" evidence="2">
    <location>
        <position position="300"/>
    </location>
</feature>
<feature type="modified residue" description="Phosphotyrosine" evidence="3">
    <location>
        <position position="346"/>
    </location>
</feature>
<sequence>MEDVVVKQGFLYLQQQQTFGKKWRRFGAALYGGSGCALARLELQEGSEKSRRGEAPRRVIRLNDCLRVSEASGEASSPRDTSTFFLETTERLYLLAAPTAERGDWIQAICLLAFPGRRKELSGLEGKGGRPRMEENELYSSTTAGTPQKEFAVTVRPTEVSERCRLRGSYTLRVGESALELWGGPESGTQLYEWPYRFLRRFGRDKVTFSFEAGRRCVSGEGNFEFETRQGNEIFLALEEAISAQKNAAPPGPQTQPVPVPAVLPRPESPYARPHDSLPPPSPTVPVPTPRQQRGLEGEYAVPFDAVARSLGKSLRGVLAVPPQLPADPLYDSIEDHPPPRPDHIYDEPEGMAALALYDSPQEPRGEAWRRQATADRDSSGLKHGYIVGQDFAASGWPQGTEYDNVVLKKGPK</sequence>
<comment type="function">
    <text evidence="1">DOK proteins are enzymatically inert adaptor or scaffolding proteins. They provide a docking platform for the assembly of multimolecular signaling complexes. DOK2 may modulate the cellular proliferation induced by IL-4, as well as IL-2 and IL-3. May be involved in modulating Bcr-Abl signaling. Attenuates EGF-stimulated MAP kinase activation (By similarity).</text>
</comment>
<comment type="subunit">
    <text evidence="1">Interacts with phosphorylated RASGAP and EGFR. Interacts with RET and NCK. Interacts (via PH domain) with TEK/TIE2 (tyrosine phosphorylated) (By similarity).</text>
</comment>
<comment type="domain">
    <text evidence="1">PTB domain mediates receptor interaction.</text>
</comment>
<comment type="PTM">
    <text evidence="1">On immunoreceptor stimulation, phosphorylated on C-terminal tyrosine residues. Phosphorylation on Tyr-346 is required for binding to the SH2 domain of NCK. Phosphorylation on both Tyr-271 and Tyr-300 is required for interaction with RASGAP. Phosphorylated on tyrosine residues by TEK/TIE2 (By similarity).</text>
</comment>
<comment type="similarity">
    <text evidence="7">Belongs to the DOK family. Type A subfamily.</text>
</comment>
<name>DOK2_BOVIN</name>
<organism>
    <name type="scientific">Bos taurus</name>
    <name type="common">Bovine</name>
    <dbReference type="NCBI Taxonomy" id="9913"/>
    <lineage>
        <taxon>Eukaryota</taxon>
        <taxon>Metazoa</taxon>
        <taxon>Chordata</taxon>
        <taxon>Craniata</taxon>
        <taxon>Vertebrata</taxon>
        <taxon>Euteleostomi</taxon>
        <taxon>Mammalia</taxon>
        <taxon>Eutheria</taxon>
        <taxon>Laurasiatheria</taxon>
        <taxon>Artiodactyla</taxon>
        <taxon>Ruminantia</taxon>
        <taxon>Pecora</taxon>
        <taxon>Bovidae</taxon>
        <taxon>Bovinae</taxon>
        <taxon>Bos</taxon>
    </lineage>
</organism>
<gene>
    <name type="primary">DOK2</name>
</gene>
<accession>A7MBB8</accession>
<keyword id="KW-0597">Phosphoprotein</keyword>
<keyword id="KW-1185">Reference proteome</keyword>
<dbReference type="EMBL" id="BC151468">
    <property type="protein sequence ID" value="AAI51469.1"/>
    <property type="molecule type" value="mRNA"/>
</dbReference>
<dbReference type="RefSeq" id="NP_001095472.1">
    <property type="nucleotide sequence ID" value="NM_001102002.2"/>
</dbReference>
<dbReference type="SMR" id="A7MBB8"/>
<dbReference type="FunCoup" id="A7MBB8">
    <property type="interactions" value="584"/>
</dbReference>
<dbReference type="STRING" id="9913.ENSBTAP00000004337"/>
<dbReference type="PaxDb" id="9913-ENSBTAP00000004337"/>
<dbReference type="Ensembl" id="ENSBTAT00000004337.7">
    <property type="protein sequence ID" value="ENSBTAP00000004337.5"/>
    <property type="gene ID" value="ENSBTAG00000003341.7"/>
</dbReference>
<dbReference type="GeneID" id="514616"/>
<dbReference type="KEGG" id="bta:514616"/>
<dbReference type="CTD" id="9046"/>
<dbReference type="VEuPathDB" id="HostDB:ENSBTAG00000003341"/>
<dbReference type="VGNC" id="VGNC:28166">
    <property type="gene designation" value="DOK2"/>
</dbReference>
<dbReference type="eggNOG" id="KOG4047">
    <property type="taxonomic scope" value="Eukaryota"/>
</dbReference>
<dbReference type="GeneTree" id="ENSGT00940000159868"/>
<dbReference type="HOGENOM" id="CLU_030101_2_0_1"/>
<dbReference type="InParanoid" id="A7MBB8"/>
<dbReference type="OMA" id="DWTQKLC"/>
<dbReference type="OrthoDB" id="6020914at2759"/>
<dbReference type="TreeFam" id="TF324994"/>
<dbReference type="Reactome" id="R-BTA-210993">
    <property type="pathway name" value="Tie2 Signaling"/>
</dbReference>
<dbReference type="Reactome" id="R-BTA-8853659">
    <property type="pathway name" value="RET signaling"/>
</dbReference>
<dbReference type="Proteomes" id="UP000009136">
    <property type="component" value="Chromosome 8"/>
</dbReference>
<dbReference type="Bgee" id="ENSBTAG00000003341">
    <property type="expression patterns" value="Expressed in monocyte and 90 other cell types or tissues"/>
</dbReference>
<dbReference type="GO" id="GO:0005737">
    <property type="term" value="C:cytoplasm"/>
    <property type="evidence" value="ECO:0000318"/>
    <property type="project" value="GO_Central"/>
</dbReference>
<dbReference type="GO" id="GO:0005886">
    <property type="term" value="C:plasma membrane"/>
    <property type="evidence" value="ECO:0007669"/>
    <property type="project" value="Ensembl"/>
</dbReference>
<dbReference type="GO" id="GO:0005068">
    <property type="term" value="F:transmembrane receptor protein tyrosine kinase adaptor activity"/>
    <property type="evidence" value="ECO:0007669"/>
    <property type="project" value="Ensembl"/>
</dbReference>
<dbReference type="GO" id="GO:0007169">
    <property type="term" value="P:cell surface receptor protein tyrosine kinase signaling pathway"/>
    <property type="evidence" value="ECO:0000318"/>
    <property type="project" value="GO_Central"/>
</dbReference>
<dbReference type="GO" id="GO:0007265">
    <property type="term" value="P:Ras protein signal transduction"/>
    <property type="evidence" value="ECO:0000318"/>
    <property type="project" value="GO_Central"/>
</dbReference>
<dbReference type="CDD" id="cd01203">
    <property type="entry name" value="PTB_DOK1_DOK2_DOK3"/>
    <property type="match status" value="1"/>
</dbReference>
<dbReference type="FunFam" id="2.30.29.30:FF:000246">
    <property type="entry name" value="Docking protein 1"/>
    <property type="match status" value="1"/>
</dbReference>
<dbReference type="Gene3D" id="2.30.29.30">
    <property type="entry name" value="Pleckstrin-homology domain (PH domain)/Phosphotyrosine-binding domain (PTB)"/>
    <property type="match status" value="2"/>
</dbReference>
<dbReference type="InterPro" id="IPR050996">
    <property type="entry name" value="Docking_Protein_DOK"/>
</dbReference>
<dbReference type="InterPro" id="IPR037751">
    <property type="entry name" value="Dok1/2/3_PTB"/>
</dbReference>
<dbReference type="InterPro" id="IPR002404">
    <property type="entry name" value="IRS_PTB"/>
</dbReference>
<dbReference type="InterPro" id="IPR011993">
    <property type="entry name" value="PH-like_dom_sf"/>
</dbReference>
<dbReference type="InterPro" id="IPR001849">
    <property type="entry name" value="PH_domain"/>
</dbReference>
<dbReference type="PANTHER" id="PTHR21258:SF14">
    <property type="entry name" value="DOCKING PROTEIN 2"/>
    <property type="match status" value="1"/>
</dbReference>
<dbReference type="PANTHER" id="PTHR21258">
    <property type="entry name" value="DOCKING PROTEIN RELATED"/>
    <property type="match status" value="1"/>
</dbReference>
<dbReference type="Pfam" id="PF02174">
    <property type="entry name" value="IRS"/>
    <property type="match status" value="1"/>
</dbReference>
<dbReference type="Pfam" id="PF00169">
    <property type="entry name" value="PH"/>
    <property type="match status" value="1"/>
</dbReference>
<dbReference type="SMART" id="SM01244">
    <property type="entry name" value="IRS"/>
    <property type="match status" value="1"/>
</dbReference>
<dbReference type="SMART" id="SM00233">
    <property type="entry name" value="PH"/>
    <property type="match status" value="1"/>
</dbReference>
<dbReference type="SMART" id="SM00310">
    <property type="entry name" value="PTBI"/>
    <property type="match status" value="1"/>
</dbReference>
<dbReference type="SUPFAM" id="SSF50729">
    <property type="entry name" value="PH domain-like"/>
    <property type="match status" value="2"/>
</dbReference>
<dbReference type="PROSITE" id="PS51064">
    <property type="entry name" value="IRS_PTB"/>
    <property type="match status" value="1"/>
</dbReference>
<dbReference type="PROSITE" id="PS50003">
    <property type="entry name" value="PH_DOMAIN"/>
    <property type="match status" value="1"/>
</dbReference>
<reference key="1">
    <citation type="submission" date="2007-07" db="EMBL/GenBank/DDBJ databases">
        <authorList>
            <consortium name="NIH - Mammalian Gene Collection (MGC) project"/>
        </authorList>
    </citation>
    <scope>NUCLEOTIDE SEQUENCE [LARGE SCALE MRNA]</scope>
    <source>
        <strain>Hereford</strain>
        <tissue>Fetal liver</tissue>
    </source>
</reference>
<protein>
    <recommendedName>
        <fullName>Docking protein 2</fullName>
    </recommendedName>
    <alternativeName>
        <fullName>Downstream of tyrosine kinase 2</fullName>
    </alternativeName>
</protein>